<evidence type="ECO:0000255" key="1">
    <source>
        <dbReference type="HAMAP-Rule" id="MF_00085"/>
    </source>
</evidence>
<comment type="function">
    <text evidence="1">Functions by promoting the formation of the first peptide bond.</text>
</comment>
<comment type="subcellular location">
    <subcellularLocation>
        <location evidence="1">Cytoplasm</location>
    </subcellularLocation>
</comment>
<comment type="similarity">
    <text evidence="1">Belongs to the eIF-5A family.</text>
</comment>
<name>IF5A_METS5</name>
<reference key="1">
    <citation type="journal article" date="2008" name="Appl. Environ. Microbiol.">
        <title>The genome sequence of the metal-mobilizing, extremely thermoacidophilic archaeon Metallosphaera sedula provides insights into bioleaching-associated metabolism.</title>
        <authorList>
            <person name="Auernik K.S."/>
            <person name="Maezato Y."/>
            <person name="Blum P.H."/>
            <person name="Kelly R.M."/>
        </authorList>
    </citation>
    <scope>NUCLEOTIDE SEQUENCE [LARGE SCALE GENOMIC DNA]</scope>
    <source>
        <strain>ATCC 51363 / DSM 5348 / JCM 9185 / NBRC 15509 / TH2</strain>
    </source>
</reference>
<organism>
    <name type="scientific">Metallosphaera sedula (strain ATCC 51363 / DSM 5348 / JCM 9185 / NBRC 15509 / TH2)</name>
    <dbReference type="NCBI Taxonomy" id="399549"/>
    <lineage>
        <taxon>Archaea</taxon>
        <taxon>Thermoproteota</taxon>
        <taxon>Thermoprotei</taxon>
        <taxon>Sulfolobales</taxon>
        <taxon>Sulfolobaceae</taxon>
        <taxon>Metallosphaera</taxon>
    </lineage>
</organism>
<keyword id="KW-0963">Cytoplasm</keyword>
<keyword id="KW-0385">Hypusine</keyword>
<keyword id="KW-0396">Initiation factor</keyword>
<keyword id="KW-0648">Protein biosynthesis</keyword>
<keyword id="KW-1185">Reference proteome</keyword>
<gene>
    <name type="primary">eIF5A</name>
    <name type="ordered locus">Msed_1756</name>
</gene>
<dbReference type="EMBL" id="CP000682">
    <property type="protein sequence ID" value="ABP95911.1"/>
    <property type="molecule type" value="Genomic_DNA"/>
</dbReference>
<dbReference type="RefSeq" id="WP_012021698.1">
    <property type="nucleotide sequence ID" value="NC_009440.1"/>
</dbReference>
<dbReference type="SMR" id="A4YHK9"/>
<dbReference type="STRING" id="399549.Msed_1756"/>
<dbReference type="GeneID" id="91756268"/>
<dbReference type="KEGG" id="mse:Msed_1756"/>
<dbReference type="eggNOG" id="arCOG04277">
    <property type="taxonomic scope" value="Archaea"/>
</dbReference>
<dbReference type="HOGENOM" id="CLU_102600_3_0_2"/>
<dbReference type="Proteomes" id="UP000000242">
    <property type="component" value="Chromosome"/>
</dbReference>
<dbReference type="GO" id="GO:0005737">
    <property type="term" value="C:cytoplasm"/>
    <property type="evidence" value="ECO:0007669"/>
    <property type="project" value="UniProtKB-SubCell"/>
</dbReference>
<dbReference type="GO" id="GO:0043022">
    <property type="term" value="F:ribosome binding"/>
    <property type="evidence" value="ECO:0007669"/>
    <property type="project" value="InterPro"/>
</dbReference>
<dbReference type="GO" id="GO:0003723">
    <property type="term" value="F:RNA binding"/>
    <property type="evidence" value="ECO:0007669"/>
    <property type="project" value="InterPro"/>
</dbReference>
<dbReference type="GO" id="GO:0003746">
    <property type="term" value="F:translation elongation factor activity"/>
    <property type="evidence" value="ECO:0007669"/>
    <property type="project" value="InterPro"/>
</dbReference>
<dbReference type="GO" id="GO:0003743">
    <property type="term" value="F:translation initiation factor activity"/>
    <property type="evidence" value="ECO:0007669"/>
    <property type="project" value="UniProtKB-UniRule"/>
</dbReference>
<dbReference type="GO" id="GO:0045901">
    <property type="term" value="P:positive regulation of translational elongation"/>
    <property type="evidence" value="ECO:0007669"/>
    <property type="project" value="InterPro"/>
</dbReference>
<dbReference type="GO" id="GO:0045905">
    <property type="term" value="P:positive regulation of translational termination"/>
    <property type="evidence" value="ECO:0007669"/>
    <property type="project" value="InterPro"/>
</dbReference>
<dbReference type="CDD" id="cd04467">
    <property type="entry name" value="S1_aIF5A"/>
    <property type="match status" value="1"/>
</dbReference>
<dbReference type="FunFam" id="2.40.50.140:FF:000334">
    <property type="entry name" value="Translation initiation factor 5A"/>
    <property type="match status" value="1"/>
</dbReference>
<dbReference type="Gene3D" id="2.30.30.30">
    <property type="match status" value="1"/>
</dbReference>
<dbReference type="Gene3D" id="2.40.50.140">
    <property type="entry name" value="Nucleic acid-binding proteins"/>
    <property type="match status" value="1"/>
</dbReference>
<dbReference type="HAMAP" id="MF_00085">
    <property type="entry name" value="eIF_5A"/>
    <property type="match status" value="1"/>
</dbReference>
<dbReference type="InterPro" id="IPR001884">
    <property type="entry name" value="IF5A-like"/>
</dbReference>
<dbReference type="InterPro" id="IPR048670">
    <property type="entry name" value="IF5A-like_N"/>
</dbReference>
<dbReference type="InterPro" id="IPR012340">
    <property type="entry name" value="NA-bd_OB-fold"/>
</dbReference>
<dbReference type="InterPro" id="IPR014722">
    <property type="entry name" value="Rib_uL2_dom2"/>
</dbReference>
<dbReference type="InterPro" id="IPR019769">
    <property type="entry name" value="Trans_elong_IF5A_hypusine_site"/>
</dbReference>
<dbReference type="InterPro" id="IPR022847">
    <property type="entry name" value="Transl_elong_IF5A_arc"/>
</dbReference>
<dbReference type="InterPro" id="IPR020189">
    <property type="entry name" value="Transl_elong_IF5A_C"/>
</dbReference>
<dbReference type="InterPro" id="IPR008991">
    <property type="entry name" value="Translation_prot_SH3-like_sf"/>
</dbReference>
<dbReference type="NCBIfam" id="TIGR00037">
    <property type="entry name" value="eIF_5A"/>
    <property type="match status" value="1"/>
</dbReference>
<dbReference type="NCBIfam" id="NF003076">
    <property type="entry name" value="PRK03999.1"/>
    <property type="match status" value="1"/>
</dbReference>
<dbReference type="PANTHER" id="PTHR11673">
    <property type="entry name" value="TRANSLATION INITIATION FACTOR 5A FAMILY MEMBER"/>
    <property type="match status" value="1"/>
</dbReference>
<dbReference type="Pfam" id="PF01287">
    <property type="entry name" value="eIF-5a"/>
    <property type="match status" value="1"/>
</dbReference>
<dbReference type="Pfam" id="PF21485">
    <property type="entry name" value="IF5A-like_N"/>
    <property type="match status" value="1"/>
</dbReference>
<dbReference type="PIRSF" id="PIRSF003025">
    <property type="entry name" value="eIF5A"/>
    <property type="match status" value="1"/>
</dbReference>
<dbReference type="SMART" id="SM01376">
    <property type="entry name" value="eIF-5a"/>
    <property type="match status" value="1"/>
</dbReference>
<dbReference type="SUPFAM" id="SSF50249">
    <property type="entry name" value="Nucleic acid-binding proteins"/>
    <property type="match status" value="1"/>
</dbReference>
<dbReference type="SUPFAM" id="SSF50104">
    <property type="entry name" value="Translation proteins SH3-like domain"/>
    <property type="match status" value="1"/>
</dbReference>
<dbReference type="PROSITE" id="PS00302">
    <property type="entry name" value="IF5A_HYPUSINE"/>
    <property type="match status" value="1"/>
</dbReference>
<accession>A4YHK9</accession>
<proteinExistence type="inferred from homology"/>
<feature type="chain" id="PRO_1000071235" description="Translation initiation factor 5A">
    <location>
        <begin position="1"/>
        <end position="131"/>
    </location>
</feature>
<feature type="modified residue" description="Hypusine" evidence="1">
    <location>
        <position position="36"/>
    </location>
</feature>
<protein>
    <recommendedName>
        <fullName evidence="1">Translation initiation factor 5A</fullName>
    </recommendedName>
    <alternativeName>
        <fullName evidence="1">Hypusine-containing protein</fullName>
    </alternativeName>
    <alternativeName>
        <fullName evidence="1">eIF-5A</fullName>
    </alternativeName>
</protein>
<sequence length="131" mass="14499">MGINYSTVGEMKEGSYIVIDGEPCRVVEVTKAKTGKHGSAKANIIAVSIFTGAKKTLMAPVDSTVEVPIIEKRMGQVISNVGDKVQIMDLETYETFEIDMPTEEDVASKIKKDAEVEYWEVMGRKKIVRVK</sequence>